<gene>
    <name evidence="1" type="primary">rplX</name>
    <name type="ordered locus">RT0640</name>
</gene>
<protein>
    <recommendedName>
        <fullName evidence="1">Large ribosomal subunit protein uL24</fullName>
    </recommendedName>
    <alternativeName>
        <fullName evidence="2">50S ribosomal protein L24</fullName>
    </alternativeName>
</protein>
<comment type="function">
    <text evidence="1">One of two assembly initiator proteins, it binds directly to the 5'-end of the 23S rRNA, where it nucleates assembly of the 50S subunit.</text>
</comment>
<comment type="function">
    <text evidence="1">One of the proteins that surrounds the polypeptide exit tunnel on the outside of the subunit.</text>
</comment>
<comment type="subunit">
    <text evidence="1">Part of the 50S ribosomal subunit.</text>
</comment>
<comment type="similarity">
    <text evidence="1">Belongs to the universal ribosomal protein uL24 family.</text>
</comment>
<sequence length="113" mass="12262">MIKLKVKKGDEVIVVTGKYKGKKGKVLKVFIDENTVIVSGVNLVKKHTKPNKMSEGGIITKESPIHISNVAHIDPKTGNPTKVAFKFLEDGSKVRIAKKSGEIIGKVGNDVKI</sequence>
<dbReference type="EMBL" id="AE017197">
    <property type="protein sequence ID" value="AAU04103.1"/>
    <property type="molecule type" value="Genomic_DNA"/>
</dbReference>
<dbReference type="RefSeq" id="WP_011191082.1">
    <property type="nucleotide sequence ID" value="NC_006142.1"/>
</dbReference>
<dbReference type="SMR" id="Q68W89"/>
<dbReference type="KEGG" id="rty:RT0640"/>
<dbReference type="eggNOG" id="COG0198">
    <property type="taxonomic scope" value="Bacteria"/>
</dbReference>
<dbReference type="HOGENOM" id="CLU_093315_2_0_5"/>
<dbReference type="OrthoDB" id="9807419at2"/>
<dbReference type="Proteomes" id="UP000000604">
    <property type="component" value="Chromosome"/>
</dbReference>
<dbReference type="GO" id="GO:1990904">
    <property type="term" value="C:ribonucleoprotein complex"/>
    <property type="evidence" value="ECO:0007669"/>
    <property type="project" value="UniProtKB-KW"/>
</dbReference>
<dbReference type="GO" id="GO:0005840">
    <property type="term" value="C:ribosome"/>
    <property type="evidence" value="ECO:0007669"/>
    <property type="project" value="UniProtKB-KW"/>
</dbReference>
<dbReference type="GO" id="GO:0019843">
    <property type="term" value="F:rRNA binding"/>
    <property type="evidence" value="ECO:0007669"/>
    <property type="project" value="UniProtKB-UniRule"/>
</dbReference>
<dbReference type="GO" id="GO:0003735">
    <property type="term" value="F:structural constituent of ribosome"/>
    <property type="evidence" value="ECO:0007669"/>
    <property type="project" value="InterPro"/>
</dbReference>
<dbReference type="GO" id="GO:0006412">
    <property type="term" value="P:translation"/>
    <property type="evidence" value="ECO:0007669"/>
    <property type="project" value="UniProtKB-UniRule"/>
</dbReference>
<dbReference type="CDD" id="cd06089">
    <property type="entry name" value="KOW_RPL26"/>
    <property type="match status" value="1"/>
</dbReference>
<dbReference type="FunFam" id="2.30.30.30:FF:000004">
    <property type="entry name" value="50S ribosomal protein L24"/>
    <property type="match status" value="1"/>
</dbReference>
<dbReference type="Gene3D" id="2.30.30.30">
    <property type="match status" value="1"/>
</dbReference>
<dbReference type="HAMAP" id="MF_01326_B">
    <property type="entry name" value="Ribosomal_uL24_B"/>
    <property type="match status" value="1"/>
</dbReference>
<dbReference type="InterPro" id="IPR005824">
    <property type="entry name" value="KOW"/>
</dbReference>
<dbReference type="InterPro" id="IPR014722">
    <property type="entry name" value="Rib_uL2_dom2"/>
</dbReference>
<dbReference type="InterPro" id="IPR003256">
    <property type="entry name" value="Ribosomal_uL24"/>
</dbReference>
<dbReference type="InterPro" id="IPR005825">
    <property type="entry name" value="Ribosomal_uL24_CS"/>
</dbReference>
<dbReference type="InterPro" id="IPR041988">
    <property type="entry name" value="Ribosomal_uL24_KOW"/>
</dbReference>
<dbReference type="InterPro" id="IPR008991">
    <property type="entry name" value="Translation_prot_SH3-like_sf"/>
</dbReference>
<dbReference type="NCBIfam" id="TIGR01079">
    <property type="entry name" value="rplX_bact"/>
    <property type="match status" value="1"/>
</dbReference>
<dbReference type="PANTHER" id="PTHR12903">
    <property type="entry name" value="MITOCHONDRIAL RIBOSOMAL PROTEIN L24"/>
    <property type="match status" value="1"/>
</dbReference>
<dbReference type="Pfam" id="PF00467">
    <property type="entry name" value="KOW"/>
    <property type="match status" value="1"/>
</dbReference>
<dbReference type="Pfam" id="PF17136">
    <property type="entry name" value="ribosomal_L24"/>
    <property type="match status" value="1"/>
</dbReference>
<dbReference type="SMART" id="SM00739">
    <property type="entry name" value="KOW"/>
    <property type="match status" value="1"/>
</dbReference>
<dbReference type="SUPFAM" id="SSF50104">
    <property type="entry name" value="Translation proteins SH3-like domain"/>
    <property type="match status" value="1"/>
</dbReference>
<dbReference type="PROSITE" id="PS01108">
    <property type="entry name" value="RIBOSOMAL_L24"/>
    <property type="match status" value="1"/>
</dbReference>
<name>RL24_RICTY</name>
<organism>
    <name type="scientific">Rickettsia typhi (strain ATCC VR-144 / Wilmington)</name>
    <dbReference type="NCBI Taxonomy" id="257363"/>
    <lineage>
        <taxon>Bacteria</taxon>
        <taxon>Pseudomonadati</taxon>
        <taxon>Pseudomonadota</taxon>
        <taxon>Alphaproteobacteria</taxon>
        <taxon>Rickettsiales</taxon>
        <taxon>Rickettsiaceae</taxon>
        <taxon>Rickettsieae</taxon>
        <taxon>Rickettsia</taxon>
        <taxon>typhus group</taxon>
    </lineage>
</organism>
<evidence type="ECO:0000255" key="1">
    <source>
        <dbReference type="HAMAP-Rule" id="MF_01326"/>
    </source>
</evidence>
<evidence type="ECO:0000305" key="2"/>
<feature type="chain" id="PRO_0000241656" description="Large ribosomal subunit protein uL24">
    <location>
        <begin position="1"/>
        <end position="113"/>
    </location>
</feature>
<keyword id="KW-0687">Ribonucleoprotein</keyword>
<keyword id="KW-0689">Ribosomal protein</keyword>
<keyword id="KW-0694">RNA-binding</keyword>
<keyword id="KW-0699">rRNA-binding</keyword>
<proteinExistence type="inferred from homology"/>
<reference key="1">
    <citation type="journal article" date="2004" name="J. Bacteriol.">
        <title>Complete genome sequence of Rickettsia typhi and comparison with sequences of other Rickettsiae.</title>
        <authorList>
            <person name="McLeod M.P."/>
            <person name="Qin X."/>
            <person name="Karpathy S.E."/>
            <person name="Gioia J."/>
            <person name="Highlander S.K."/>
            <person name="Fox G.E."/>
            <person name="McNeill T.Z."/>
            <person name="Jiang H."/>
            <person name="Muzny D."/>
            <person name="Jacob L.S."/>
            <person name="Hawes A.C."/>
            <person name="Sodergren E."/>
            <person name="Gill R."/>
            <person name="Hume J."/>
            <person name="Morgan M."/>
            <person name="Fan G."/>
            <person name="Amin A.G."/>
            <person name="Gibbs R.A."/>
            <person name="Hong C."/>
            <person name="Yu X.-J."/>
            <person name="Walker D.H."/>
            <person name="Weinstock G.M."/>
        </authorList>
    </citation>
    <scope>NUCLEOTIDE SEQUENCE [LARGE SCALE GENOMIC DNA]</scope>
    <source>
        <strain>ATCC VR-144 / Wilmington</strain>
    </source>
</reference>
<accession>Q68W89</accession>